<feature type="chain" id="PRO_0000172335" description="Large ribosomal subunit protein bL32">
    <location>
        <begin position="1"/>
        <end position="64"/>
    </location>
</feature>
<feature type="region of interest" description="Disordered" evidence="2">
    <location>
        <begin position="1"/>
        <end position="64"/>
    </location>
</feature>
<feature type="compositionally biased region" description="Basic residues" evidence="2">
    <location>
        <begin position="1"/>
        <end position="16"/>
    </location>
</feature>
<accession>Q83E41</accession>
<keyword id="KW-1185">Reference proteome</keyword>
<keyword id="KW-0687">Ribonucleoprotein</keyword>
<keyword id="KW-0689">Ribosomal protein</keyword>
<proteinExistence type="inferred from homology"/>
<organism>
    <name type="scientific">Coxiella burnetii (strain RSA 493 / Nine Mile phase I)</name>
    <dbReference type="NCBI Taxonomy" id="227377"/>
    <lineage>
        <taxon>Bacteria</taxon>
        <taxon>Pseudomonadati</taxon>
        <taxon>Pseudomonadota</taxon>
        <taxon>Gammaproteobacteria</taxon>
        <taxon>Legionellales</taxon>
        <taxon>Coxiellaceae</taxon>
        <taxon>Coxiella</taxon>
    </lineage>
</organism>
<gene>
    <name evidence="1" type="primary">rpmF</name>
    <name type="ordered locus">CBU_0491</name>
</gene>
<sequence>MAVQKSRKTRSRRGMRRSHDALRGAMLSKDPTTGETHLRHHISPEGYYKGRQILTPKESYEDEE</sequence>
<protein>
    <recommendedName>
        <fullName evidence="1">Large ribosomal subunit protein bL32</fullName>
    </recommendedName>
    <alternativeName>
        <fullName evidence="3">50S ribosomal protein L32</fullName>
    </alternativeName>
</protein>
<name>RL32_COXBU</name>
<dbReference type="EMBL" id="AE016828">
    <property type="protein sequence ID" value="AAO90039.1"/>
    <property type="molecule type" value="Genomic_DNA"/>
</dbReference>
<dbReference type="RefSeq" id="NP_819525.1">
    <property type="nucleotide sequence ID" value="NC_002971.4"/>
</dbReference>
<dbReference type="RefSeq" id="WP_005771287.1">
    <property type="nucleotide sequence ID" value="NZ_CDBG01000001.1"/>
</dbReference>
<dbReference type="SMR" id="Q83E41"/>
<dbReference type="STRING" id="227377.CBU_0491"/>
<dbReference type="EnsemblBacteria" id="AAO90039">
    <property type="protein sequence ID" value="AAO90039"/>
    <property type="gene ID" value="CBU_0491"/>
</dbReference>
<dbReference type="GeneID" id="1208375"/>
<dbReference type="KEGG" id="cbu:CBU_0491"/>
<dbReference type="PATRIC" id="fig|227377.7.peg.482"/>
<dbReference type="eggNOG" id="COG0333">
    <property type="taxonomic scope" value="Bacteria"/>
</dbReference>
<dbReference type="HOGENOM" id="CLU_129084_2_1_6"/>
<dbReference type="OrthoDB" id="9801927at2"/>
<dbReference type="Proteomes" id="UP000002671">
    <property type="component" value="Chromosome"/>
</dbReference>
<dbReference type="GO" id="GO:0022625">
    <property type="term" value="C:cytosolic large ribosomal subunit"/>
    <property type="evidence" value="ECO:0000318"/>
    <property type="project" value="GO_Central"/>
</dbReference>
<dbReference type="GO" id="GO:0003735">
    <property type="term" value="F:structural constituent of ribosome"/>
    <property type="evidence" value="ECO:0000318"/>
    <property type="project" value="GO_Central"/>
</dbReference>
<dbReference type="GO" id="GO:0006412">
    <property type="term" value="P:translation"/>
    <property type="evidence" value="ECO:0007669"/>
    <property type="project" value="UniProtKB-UniRule"/>
</dbReference>
<dbReference type="HAMAP" id="MF_00340">
    <property type="entry name" value="Ribosomal_bL32"/>
    <property type="match status" value="1"/>
</dbReference>
<dbReference type="InterPro" id="IPR002677">
    <property type="entry name" value="Ribosomal_bL32"/>
</dbReference>
<dbReference type="InterPro" id="IPR044957">
    <property type="entry name" value="Ribosomal_bL32_bact"/>
</dbReference>
<dbReference type="InterPro" id="IPR011332">
    <property type="entry name" value="Ribosomal_zn-bd"/>
</dbReference>
<dbReference type="NCBIfam" id="TIGR01031">
    <property type="entry name" value="rpmF_bact"/>
    <property type="match status" value="1"/>
</dbReference>
<dbReference type="PANTHER" id="PTHR35534">
    <property type="entry name" value="50S RIBOSOMAL PROTEIN L32"/>
    <property type="match status" value="1"/>
</dbReference>
<dbReference type="PANTHER" id="PTHR35534:SF1">
    <property type="entry name" value="LARGE RIBOSOMAL SUBUNIT PROTEIN BL32"/>
    <property type="match status" value="1"/>
</dbReference>
<dbReference type="Pfam" id="PF01783">
    <property type="entry name" value="Ribosomal_L32p"/>
    <property type="match status" value="1"/>
</dbReference>
<dbReference type="SUPFAM" id="SSF57829">
    <property type="entry name" value="Zn-binding ribosomal proteins"/>
    <property type="match status" value="1"/>
</dbReference>
<reference key="1">
    <citation type="journal article" date="2003" name="Proc. Natl. Acad. Sci. U.S.A.">
        <title>Complete genome sequence of the Q-fever pathogen, Coxiella burnetii.</title>
        <authorList>
            <person name="Seshadri R."/>
            <person name="Paulsen I.T."/>
            <person name="Eisen J.A."/>
            <person name="Read T.D."/>
            <person name="Nelson K.E."/>
            <person name="Nelson W.C."/>
            <person name="Ward N.L."/>
            <person name="Tettelin H."/>
            <person name="Davidsen T.M."/>
            <person name="Beanan M.J."/>
            <person name="DeBoy R.T."/>
            <person name="Daugherty S.C."/>
            <person name="Brinkac L.M."/>
            <person name="Madupu R."/>
            <person name="Dodson R.J."/>
            <person name="Khouri H.M."/>
            <person name="Lee K.H."/>
            <person name="Carty H.A."/>
            <person name="Scanlan D."/>
            <person name="Heinzen R.A."/>
            <person name="Thompson H.A."/>
            <person name="Samuel J.E."/>
            <person name="Fraser C.M."/>
            <person name="Heidelberg J.F."/>
        </authorList>
    </citation>
    <scope>NUCLEOTIDE SEQUENCE [LARGE SCALE GENOMIC DNA]</scope>
    <source>
        <strain>RSA 493 / Nine Mile phase I</strain>
    </source>
</reference>
<comment type="similarity">
    <text evidence="1">Belongs to the bacterial ribosomal protein bL32 family.</text>
</comment>
<evidence type="ECO:0000255" key="1">
    <source>
        <dbReference type="HAMAP-Rule" id="MF_00340"/>
    </source>
</evidence>
<evidence type="ECO:0000256" key="2">
    <source>
        <dbReference type="SAM" id="MobiDB-lite"/>
    </source>
</evidence>
<evidence type="ECO:0000305" key="3"/>